<reference key="1">
    <citation type="journal article" date="1999" name="Genomics">
        <title>Identification and chromosomal location of two human genes encoding enzymes potentially involved in proteolytic maturation of farnesylated proteins.</title>
        <authorList>
            <person name="Freije J.M.P."/>
            <person name="Blay P."/>
            <person name="Pendas A.M."/>
            <person name="Cadinanos J."/>
            <person name="Crespo P."/>
            <person name="Lopez-Otin C."/>
        </authorList>
    </citation>
    <scope>NUCLEOTIDE SEQUENCE [MRNA]</scope>
    <source>
        <tissue>Ovary</tissue>
    </source>
</reference>
<reference key="2">
    <citation type="journal article" date="1999" name="J. Biol. Chem.">
        <title>Cloning and characterization of a mammalian prenyl protein-specific protease.</title>
        <authorList>
            <person name="Otto J.C."/>
            <person name="Kim E."/>
            <person name="Young S.G."/>
            <person name="Casey P.J."/>
        </authorList>
    </citation>
    <scope>NUCLEOTIDE SEQUENCE [MRNA]</scope>
    <scope>FUNCTION</scope>
    <scope>CATALYTIC ACTIVITY</scope>
    <scope>BIOPHYSICOCHEMICAL PROPERTIES</scope>
    <scope>TISSUE SPECIFICITY</scope>
</reference>
<reference key="3">
    <citation type="journal article" date="2004" name="Genome Res.">
        <title>The status, quality, and expansion of the NIH full-length cDNA project: the Mammalian Gene Collection (MGC).</title>
        <authorList>
            <consortium name="The MGC Project Team"/>
        </authorList>
    </citation>
    <scope>NUCLEOTIDE SEQUENCE [LARGE SCALE MRNA]</scope>
    <source>
        <tissue>Brain</tissue>
    </source>
</reference>
<reference key="4">
    <citation type="journal article" date="2000" name="Anal. Biochem.">
        <title>Human ras-converting enzyme (hRCE1) endoproteolytic activity on K-ras-derived peptides.</title>
        <authorList>
            <person name="Hollander I."/>
            <person name="Frommer E."/>
            <person name="Mallon R."/>
        </authorList>
    </citation>
    <scope>CHARACTERIZATION</scope>
    <scope>FUNCTION</scope>
</reference>
<reference key="5">
    <citation type="journal article" date="2009" name="J. Biol. Chem.">
        <title>USP17 regulates Ras activation and cell proliferation by blocking RCE1 activity.</title>
        <authorList>
            <person name="Burrows J.F."/>
            <person name="Kelvin A.A."/>
            <person name="McFarlane C."/>
            <person name="Burden R.E."/>
            <person name="McGrattan M.J."/>
            <person name="De la Vega M."/>
            <person name="Govender U."/>
            <person name="Quinn D.J."/>
            <person name="Dib K."/>
            <person name="Gadina M."/>
            <person name="Scott C.J."/>
            <person name="Johnston J.A."/>
        </authorList>
    </citation>
    <scope>UBIQUITINATION</scope>
    <scope>DEUBIQUITINATION BY USP17L2</scope>
    <scope>SUBCELLULAR LOCATION</scope>
    <scope>ACTIVITY REGULATION</scope>
    <scope>FUNCTION</scope>
</reference>
<reference key="6">
    <citation type="journal article" date="2012" name="Proc. Natl. Acad. Sci. U.S.A.">
        <title>N-terminal acetylome analyses and functional insights of the N-terminal acetyltransferase NatB.</title>
        <authorList>
            <person name="Van Damme P."/>
            <person name="Lasa M."/>
            <person name="Polevoda B."/>
            <person name="Gazquez C."/>
            <person name="Elosegui-Artola A."/>
            <person name="Kim D.S."/>
            <person name="De Juan-Pardo E."/>
            <person name="Demeyer K."/>
            <person name="Hole K."/>
            <person name="Larrea E."/>
            <person name="Timmerman E."/>
            <person name="Prieto J."/>
            <person name="Arnesen T."/>
            <person name="Sherman F."/>
            <person name="Gevaert K."/>
            <person name="Aldabe R."/>
        </authorList>
    </citation>
    <scope>ACETYLATION [LARGE SCALE ANALYSIS] AT ALA-2</scope>
    <scope>CLEAVAGE OF INITIATOR METHIONINE [LARGE SCALE ANALYSIS]</scope>
    <scope>IDENTIFICATION BY MASS SPECTROMETRY [LARGE SCALE ANALYSIS]</scope>
</reference>
<reference key="7">
    <citation type="journal article" date="2006" name="Science">
        <title>The consensus coding sequences of human breast and colorectal cancers.</title>
        <authorList>
            <person name="Sjoeblom T."/>
            <person name="Jones S."/>
            <person name="Wood L.D."/>
            <person name="Parsons D.W."/>
            <person name="Lin J."/>
            <person name="Barber T.D."/>
            <person name="Mandelker D."/>
            <person name="Leary R.J."/>
            <person name="Ptak J."/>
            <person name="Silliman N."/>
            <person name="Szabo S."/>
            <person name="Buckhaults P."/>
            <person name="Farrell C."/>
            <person name="Meeh P."/>
            <person name="Markowitz S.D."/>
            <person name="Willis J."/>
            <person name="Dawson D."/>
            <person name="Willson J.K.V."/>
            <person name="Gazdar A.F."/>
            <person name="Hartigan J."/>
            <person name="Wu L."/>
            <person name="Liu C."/>
            <person name="Parmigiani G."/>
            <person name="Park B.H."/>
            <person name="Bachman K.E."/>
            <person name="Papadopoulos N."/>
            <person name="Vogelstein B."/>
            <person name="Kinzler K.W."/>
            <person name="Velculescu V.E."/>
        </authorList>
    </citation>
    <scope>VARIANT [LARGE SCALE ANALYSIS] ALA-326</scope>
</reference>
<proteinExistence type="evidence at protein level"/>
<protein>
    <recommendedName>
        <fullName>CAAX prenyl protease 2</fullName>
        <ecNumber evidence="3">3.4.26.1</ecNumber>
    </recommendedName>
    <alternativeName>
        <fullName>Farnesylated proteins-converting enzyme 2</fullName>
        <shortName>FACE-2</shortName>
    </alternativeName>
    <alternativeName>
        <fullName>Prenyl protein-specific endoprotease 2</fullName>
    </alternativeName>
    <alternativeName>
        <fullName evidence="7">RCE1 homolog</fullName>
        <shortName evidence="7">hRCE1</shortName>
    </alternativeName>
</protein>
<dbReference type="EC" id="3.4.26.1" evidence="3"/>
<dbReference type="EMBL" id="Y13835">
    <property type="protein sequence ID" value="CAB46278.1"/>
    <property type="molecule type" value="mRNA"/>
</dbReference>
<dbReference type="EMBL" id="AF121951">
    <property type="protein sequence ID" value="AAD22632.1"/>
    <property type="molecule type" value="mRNA"/>
</dbReference>
<dbReference type="EMBL" id="BC093726">
    <property type="protein sequence ID" value="AAH93726.1"/>
    <property type="molecule type" value="mRNA"/>
</dbReference>
<dbReference type="EMBL" id="BC093728">
    <property type="protein sequence ID" value="AAH93728.1"/>
    <property type="molecule type" value="mRNA"/>
</dbReference>
<dbReference type="CCDS" id="CCDS8151.1"/>
<dbReference type="RefSeq" id="NP_001027450.1">
    <property type="nucleotide sequence ID" value="NM_001032279.1"/>
</dbReference>
<dbReference type="RefSeq" id="NP_005124.1">
    <property type="nucleotide sequence ID" value="NM_005133.3"/>
</dbReference>
<dbReference type="BioGRID" id="115307">
    <property type="interactions" value="13"/>
</dbReference>
<dbReference type="FunCoup" id="Q9Y256">
    <property type="interactions" value="1972"/>
</dbReference>
<dbReference type="IntAct" id="Q9Y256">
    <property type="interactions" value="6"/>
</dbReference>
<dbReference type="STRING" id="9606.ENSP00000309163"/>
<dbReference type="BindingDB" id="Q9Y256"/>
<dbReference type="ChEMBL" id="CHEMBL3411"/>
<dbReference type="DrugCentral" id="Q9Y256"/>
<dbReference type="GuidetoPHARMACOLOGY" id="2412"/>
<dbReference type="MEROPS" id="G05.002"/>
<dbReference type="iPTMnet" id="Q9Y256"/>
<dbReference type="PhosphoSitePlus" id="Q9Y256"/>
<dbReference type="SwissPalm" id="Q9Y256"/>
<dbReference type="BioMuta" id="RCE1"/>
<dbReference type="DMDM" id="13431529"/>
<dbReference type="jPOST" id="Q9Y256"/>
<dbReference type="MassIVE" id="Q9Y256"/>
<dbReference type="PaxDb" id="9606-ENSP00000309163"/>
<dbReference type="PeptideAtlas" id="Q9Y256"/>
<dbReference type="ProteomicsDB" id="85658"/>
<dbReference type="Pumba" id="Q9Y256"/>
<dbReference type="Antibodypedia" id="16385">
    <property type="antibodies" value="138 antibodies from 27 providers"/>
</dbReference>
<dbReference type="DNASU" id="9986"/>
<dbReference type="Ensembl" id="ENST00000309657.8">
    <property type="protein sequence ID" value="ENSP00000309163.3"/>
    <property type="gene ID" value="ENSG00000173653.8"/>
</dbReference>
<dbReference type="GeneID" id="9986"/>
<dbReference type="KEGG" id="hsa:9986"/>
<dbReference type="MANE-Select" id="ENST00000309657.8">
    <property type="protein sequence ID" value="ENSP00000309163.3"/>
    <property type="RefSeq nucleotide sequence ID" value="NM_005133.3"/>
    <property type="RefSeq protein sequence ID" value="NP_005124.1"/>
</dbReference>
<dbReference type="UCSC" id="uc001ojk.2">
    <property type="organism name" value="human"/>
</dbReference>
<dbReference type="AGR" id="HGNC:13721"/>
<dbReference type="CTD" id="9986"/>
<dbReference type="DisGeNET" id="9986"/>
<dbReference type="GeneCards" id="RCE1"/>
<dbReference type="HGNC" id="HGNC:13721">
    <property type="gene designation" value="RCE1"/>
</dbReference>
<dbReference type="HPA" id="ENSG00000173653">
    <property type="expression patterns" value="Low tissue specificity"/>
</dbReference>
<dbReference type="MIM" id="605385">
    <property type="type" value="gene"/>
</dbReference>
<dbReference type="neXtProt" id="NX_Q9Y256"/>
<dbReference type="OpenTargets" id="ENSG00000173653"/>
<dbReference type="PharmGKB" id="PA34302"/>
<dbReference type="VEuPathDB" id="HostDB:ENSG00000173653"/>
<dbReference type="eggNOG" id="KOG4130">
    <property type="taxonomic scope" value="Eukaryota"/>
</dbReference>
<dbReference type="GeneTree" id="ENSGT00390000004124"/>
<dbReference type="HOGENOM" id="CLU_049909_3_0_1"/>
<dbReference type="InParanoid" id="Q9Y256"/>
<dbReference type="OMA" id="HSFCNWC"/>
<dbReference type="OrthoDB" id="271604at2759"/>
<dbReference type="PAN-GO" id="Q9Y256">
    <property type="GO annotations" value="3 GO annotations based on evolutionary models"/>
</dbReference>
<dbReference type="PhylomeDB" id="Q9Y256"/>
<dbReference type="TreeFam" id="TF313800"/>
<dbReference type="BRENDA" id="3.4.99.B1">
    <property type="organism ID" value="2681"/>
</dbReference>
<dbReference type="PathwayCommons" id="Q9Y256"/>
<dbReference type="Reactome" id="R-HSA-5689880">
    <property type="pathway name" value="Ub-specific processing proteases"/>
</dbReference>
<dbReference type="Reactome" id="R-HSA-9648002">
    <property type="pathway name" value="RAS processing"/>
</dbReference>
<dbReference type="SignaLink" id="Q9Y256"/>
<dbReference type="BioGRID-ORCS" id="9986">
    <property type="hits" value="41 hits in 1152 CRISPR screens"/>
</dbReference>
<dbReference type="ChiTaRS" id="RCE1">
    <property type="organism name" value="human"/>
</dbReference>
<dbReference type="GeneWiki" id="RCE1"/>
<dbReference type="GenomeRNAi" id="9986"/>
<dbReference type="Pharos" id="Q9Y256">
    <property type="development level" value="Tchem"/>
</dbReference>
<dbReference type="PRO" id="PR:Q9Y256"/>
<dbReference type="Proteomes" id="UP000005640">
    <property type="component" value="Chromosome 11"/>
</dbReference>
<dbReference type="RNAct" id="Q9Y256">
    <property type="molecule type" value="protein"/>
</dbReference>
<dbReference type="Bgee" id="ENSG00000173653">
    <property type="expression patterns" value="Expressed in lower esophagus mucosa and 158 other cell types or tissues"/>
</dbReference>
<dbReference type="ExpressionAtlas" id="Q9Y256">
    <property type="expression patterns" value="baseline and differential"/>
</dbReference>
<dbReference type="GO" id="GO:0005829">
    <property type="term" value="C:cytosol"/>
    <property type="evidence" value="ECO:0000304"/>
    <property type="project" value="Reactome"/>
</dbReference>
<dbReference type="GO" id="GO:0005789">
    <property type="term" value="C:endoplasmic reticulum membrane"/>
    <property type="evidence" value="ECO:0000314"/>
    <property type="project" value="UniProtKB"/>
</dbReference>
<dbReference type="GO" id="GO:0016020">
    <property type="term" value="C:membrane"/>
    <property type="evidence" value="ECO:0007005"/>
    <property type="project" value="UniProtKB"/>
</dbReference>
<dbReference type="GO" id="GO:0005886">
    <property type="term" value="C:plasma membrane"/>
    <property type="evidence" value="ECO:0000304"/>
    <property type="project" value="ProtInc"/>
</dbReference>
<dbReference type="GO" id="GO:0004197">
    <property type="term" value="F:cysteine-type endopeptidase activity"/>
    <property type="evidence" value="ECO:0000304"/>
    <property type="project" value="Reactome"/>
</dbReference>
<dbReference type="GO" id="GO:0004175">
    <property type="term" value="F:endopeptidase activity"/>
    <property type="evidence" value="ECO:0000314"/>
    <property type="project" value="UniProtKB"/>
</dbReference>
<dbReference type="GO" id="GO:0008238">
    <property type="term" value="F:exopeptidase activity"/>
    <property type="evidence" value="ECO:0000314"/>
    <property type="project" value="GO_Central"/>
</dbReference>
<dbReference type="GO" id="GO:0004222">
    <property type="term" value="F:metalloendopeptidase activity"/>
    <property type="evidence" value="ECO:0000318"/>
    <property type="project" value="GO_Central"/>
</dbReference>
<dbReference type="GO" id="GO:0071586">
    <property type="term" value="P:CAAX-box protein processing"/>
    <property type="evidence" value="ECO:0000314"/>
    <property type="project" value="GO_Central"/>
</dbReference>
<dbReference type="GO" id="GO:0000165">
    <property type="term" value="P:MAPK cascade"/>
    <property type="evidence" value="ECO:0000304"/>
    <property type="project" value="Reactome"/>
</dbReference>
<dbReference type="GO" id="GO:0018342">
    <property type="term" value="P:protein prenylation"/>
    <property type="evidence" value="ECO:0000314"/>
    <property type="project" value="GO_Central"/>
</dbReference>
<dbReference type="InterPro" id="IPR039731">
    <property type="entry name" value="Rce1"/>
</dbReference>
<dbReference type="InterPro" id="IPR003675">
    <property type="entry name" value="Rce1/LyrA-like_dom"/>
</dbReference>
<dbReference type="PANTHER" id="PTHR13046:SF0">
    <property type="entry name" value="CAAX PRENYL PROTEASE 2"/>
    <property type="match status" value="1"/>
</dbReference>
<dbReference type="PANTHER" id="PTHR13046">
    <property type="entry name" value="PROTEASE U48 CAAX PRENYL PROTEASE RCE1"/>
    <property type="match status" value="1"/>
</dbReference>
<dbReference type="Pfam" id="PF02517">
    <property type="entry name" value="Rce1-like"/>
    <property type="match status" value="1"/>
</dbReference>
<sequence>MAALGGDGLRLLSVSRPERPPESAALGGLGPGLCCWVSVFSCLSLACSYVGSLYVWKSELPRDHPAVIKRRFTSVLVVSSLSPLCVLLWRELTGIQPGTSLLTLMGFRLEGIFPAALLPLLLTMILFLGPLMQLSMDCPCDLADGLKVVLAPRSWARCLTDMRWLRNQVIAPLTEELVFRACMLPMLAPCMGLGPAVFTCPLFFGVAHFHHIIEQLRFRQSSVGNIFLSAAFQFSYTAVFGAYTAFLFIRTGHLIGPVLCHSFCNYMGFPAVCAALEHPQRRPLLAGYALGVGLFLLLLQPLTDPKLYGSLPLCVLLERAGDSEAPLCS</sequence>
<gene>
    <name type="primary">RCE1</name>
    <name type="synonym">FACE2</name>
    <name type="synonym">RCE1A</name>
    <name type="synonym">RCE1B</name>
</gene>
<name>FACE2_HUMAN</name>
<feature type="initiator methionine" description="Removed" evidence="9">
    <location>
        <position position="1"/>
    </location>
</feature>
<feature type="chain" id="PRO_0000194830" description="CAAX prenyl protease 2">
    <location>
        <begin position="2"/>
        <end position="329"/>
    </location>
</feature>
<feature type="transmembrane region" description="Helical" evidence="2">
    <location>
        <begin position="25"/>
        <end position="45"/>
    </location>
</feature>
<feature type="transmembrane region" description="Helical" evidence="2">
    <location>
        <begin position="75"/>
        <end position="95"/>
    </location>
</feature>
<feature type="transmembrane region" description="Helical" evidence="2">
    <location>
        <begin position="112"/>
        <end position="132"/>
    </location>
</feature>
<feature type="transmembrane region" description="Helical" evidence="2">
    <location>
        <begin position="186"/>
        <end position="206"/>
    </location>
</feature>
<feature type="transmembrane region" description="Helical" evidence="2">
    <location>
        <begin position="229"/>
        <end position="249"/>
    </location>
</feature>
<feature type="transmembrane region" description="Helical" evidence="2">
    <location>
        <begin position="254"/>
        <end position="274"/>
    </location>
</feature>
<feature type="transmembrane region" description="Helical" evidence="2">
    <location>
        <begin position="283"/>
        <end position="303"/>
    </location>
</feature>
<feature type="active site" description="Proton donor/acceptor" evidence="1">
    <location>
        <position position="175"/>
    </location>
</feature>
<feature type="active site" description="Proton donor/acceptor" evidence="1">
    <location>
        <position position="208"/>
    </location>
</feature>
<feature type="site" description="Transition state stabilizer" evidence="1">
    <location>
        <position position="261"/>
    </location>
</feature>
<feature type="site" description="Transition state stabilizer" evidence="1">
    <location>
        <position position="265"/>
    </location>
</feature>
<feature type="modified residue" description="N-acetylalanine" evidence="9">
    <location>
        <position position="2"/>
    </location>
</feature>
<feature type="sequence variant" id="VAR_036407" description="In a breast cancer sample; somatic mutation." evidence="5">
    <original>P</original>
    <variation>A</variation>
    <location>
        <position position="326"/>
    </location>
</feature>
<organism>
    <name type="scientific">Homo sapiens</name>
    <name type="common">Human</name>
    <dbReference type="NCBI Taxonomy" id="9606"/>
    <lineage>
        <taxon>Eukaryota</taxon>
        <taxon>Metazoa</taxon>
        <taxon>Chordata</taxon>
        <taxon>Craniata</taxon>
        <taxon>Vertebrata</taxon>
        <taxon>Euteleostomi</taxon>
        <taxon>Mammalia</taxon>
        <taxon>Eutheria</taxon>
        <taxon>Euarchontoglires</taxon>
        <taxon>Primates</taxon>
        <taxon>Haplorrhini</taxon>
        <taxon>Catarrhini</taxon>
        <taxon>Hominidae</taxon>
        <taxon>Homo</taxon>
    </lineage>
</organism>
<accession>Q9Y256</accession>
<accession>Q52LZ9</accession>
<evidence type="ECO:0000250" key="1">
    <source>
        <dbReference type="UniProtKB" id="Q6LZY8"/>
    </source>
</evidence>
<evidence type="ECO:0000255" key="2"/>
<evidence type="ECO:0000269" key="3">
    <source>
    </source>
</evidence>
<evidence type="ECO:0000269" key="4">
    <source>
    </source>
</evidence>
<evidence type="ECO:0000269" key="5">
    <source>
    </source>
</evidence>
<evidence type="ECO:0000269" key="6">
    <source>
    </source>
</evidence>
<evidence type="ECO:0000303" key="7">
    <source>
    </source>
</evidence>
<evidence type="ECO:0000305" key="8"/>
<evidence type="ECO:0007744" key="9">
    <source>
    </source>
</evidence>
<keyword id="KW-0007">Acetylation</keyword>
<keyword id="KW-0256">Endoplasmic reticulum</keyword>
<keyword id="KW-0378">Hydrolase</keyword>
<keyword id="KW-0472">Membrane</keyword>
<keyword id="KW-0645">Protease</keyword>
<keyword id="KW-1267">Proteomics identification</keyword>
<keyword id="KW-1185">Reference proteome</keyword>
<keyword id="KW-0812">Transmembrane</keyword>
<keyword id="KW-1133">Transmembrane helix</keyword>
<keyword id="KW-0832">Ubl conjugation</keyword>
<comment type="function">
    <text evidence="3 4 6">Protease involved in the processing of a variety of prenylated proteins containing the C-terminal CAAX motif, where C is a cysteine modified with an isoprenoid lipid, A is an aliphatic amino acid and X is any C-terminal amino acid. Proteolytically removes the C-terminal three residues of farnesylated and geranylated proteins, leaving the prenylated cysteine as the new C-terminus. Is able to process K-Ras, N-Ras, H-Ras, RAP1B and G-gamma-1 (PubMed:10085068).</text>
</comment>
<comment type="catalytic activity">
    <reaction evidence="3">
        <text>Hydrolyzes the peptide bond -P2-(S-farnesyl or geranylgeranyl)C-P1'-P2'-P3'-COOH where P1' and P2' are amino acids with aliphatic sidechains and P3' is any C-terminal residue.</text>
        <dbReference type="EC" id="3.4.26.1"/>
    </reaction>
</comment>
<comment type="activity regulation">
    <text evidence="6">Deubiquitination by USP17L2/USP17 negatively regulates the proteolytic activity toward Ras GTPases.</text>
</comment>
<comment type="biophysicochemical properties">
    <kinetics>
        <KM evidence="3">0.5 uM for farnesyl-Ki-Ras</KM>
        <KM evidence="3">0.5 uM for geranylgeranyl-Ki-Ras</KM>
    </kinetics>
</comment>
<comment type="subcellular location">
    <subcellularLocation>
        <location evidence="6">Endoplasmic reticulum membrane</location>
        <topology evidence="6">Multi-pass membrane protein</topology>
    </subcellularLocation>
</comment>
<comment type="tissue specificity">
    <text evidence="3">Ubiquitous.</text>
</comment>
<comment type="PTM">
    <text evidence="6">Ubiquitinated. Undergoes 'Lys-48'- and 'Lys-63'-linked ubiquitination. 'Lys-48' ubiquitination induces its degradation. Deubiquitinated by USP17L2/USP17 that cleaves 'Lys-63'-linked ubiquitin chains.</text>
</comment>
<comment type="similarity">
    <text evidence="8">Belongs to the peptidase U48 family.</text>
</comment>